<gene>
    <name evidence="1" type="primary">rpsI</name>
    <name type="ordered locus">Dred_0257</name>
</gene>
<reference key="1">
    <citation type="submission" date="2007-03" db="EMBL/GenBank/DDBJ databases">
        <title>Complete sequence of Desulfotomaculum reducens MI-1.</title>
        <authorList>
            <consortium name="US DOE Joint Genome Institute"/>
            <person name="Copeland A."/>
            <person name="Lucas S."/>
            <person name="Lapidus A."/>
            <person name="Barry K."/>
            <person name="Detter J.C."/>
            <person name="Glavina del Rio T."/>
            <person name="Hammon N."/>
            <person name="Israni S."/>
            <person name="Dalin E."/>
            <person name="Tice H."/>
            <person name="Pitluck S."/>
            <person name="Sims D."/>
            <person name="Brettin T."/>
            <person name="Bruce D."/>
            <person name="Han C."/>
            <person name="Tapia R."/>
            <person name="Schmutz J."/>
            <person name="Larimer F."/>
            <person name="Land M."/>
            <person name="Hauser L."/>
            <person name="Kyrpides N."/>
            <person name="Kim E."/>
            <person name="Tebo B.M."/>
            <person name="Richardson P."/>
        </authorList>
    </citation>
    <scope>NUCLEOTIDE SEQUENCE [LARGE SCALE GENOMIC DNA]</scope>
    <source>
        <strain>ATCC BAA-1160 / DSM 100696 / MI-1</strain>
    </source>
</reference>
<name>RS9_DESRM</name>
<comment type="similarity">
    <text evidence="1">Belongs to the universal ribosomal protein uS9 family.</text>
</comment>
<keyword id="KW-1185">Reference proteome</keyword>
<keyword id="KW-0687">Ribonucleoprotein</keyword>
<keyword id="KW-0689">Ribosomal protein</keyword>
<feature type="chain" id="PRO_1000072518" description="Small ribosomal subunit protein uS9">
    <location>
        <begin position="1"/>
        <end position="130"/>
    </location>
</feature>
<feature type="region of interest" description="Disordered" evidence="2">
    <location>
        <begin position="108"/>
        <end position="130"/>
    </location>
</feature>
<feature type="compositionally biased region" description="Basic residues" evidence="2">
    <location>
        <begin position="111"/>
        <end position="130"/>
    </location>
</feature>
<accession>A4J153</accession>
<protein>
    <recommendedName>
        <fullName evidence="1">Small ribosomal subunit protein uS9</fullName>
    </recommendedName>
    <alternativeName>
        <fullName evidence="3">30S ribosomal protein S9</fullName>
    </alternativeName>
</protein>
<sequence length="130" mass="14522">MAQVQFYGTGRRKNAVARVYLVPGEGKVVVNNKEVLDYFGRKTLDMVVRQPLELTNTTGRFDVLVKVVGGGVSGQAGATRHGLARALVQADPNLRPVLKRAGFLTRDPRMKERRKYGLKKARRAPQFSKR</sequence>
<dbReference type="EMBL" id="CP000612">
    <property type="protein sequence ID" value="ABO48806.1"/>
    <property type="molecule type" value="Genomic_DNA"/>
</dbReference>
<dbReference type="RefSeq" id="WP_011876644.1">
    <property type="nucleotide sequence ID" value="NC_009253.1"/>
</dbReference>
<dbReference type="SMR" id="A4J153"/>
<dbReference type="STRING" id="349161.Dred_0257"/>
<dbReference type="KEGG" id="drm:Dred_0257"/>
<dbReference type="eggNOG" id="COG0103">
    <property type="taxonomic scope" value="Bacteria"/>
</dbReference>
<dbReference type="HOGENOM" id="CLU_046483_2_1_9"/>
<dbReference type="OrthoDB" id="9803965at2"/>
<dbReference type="Proteomes" id="UP000001556">
    <property type="component" value="Chromosome"/>
</dbReference>
<dbReference type="GO" id="GO:0022627">
    <property type="term" value="C:cytosolic small ribosomal subunit"/>
    <property type="evidence" value="ECO:0007669"/>
    <property type="project" value="TreeGrafter"/>
</dbReference>
<dbReference type="GO" id="GO:0003723">
    <property type="term" value="F:RNA binding"/>
    <property type="evidence" value="ECO:0007669"/>
    <property type="project" value="TreeGrafter"/>
</dbReference>
<dbReference type="GO" id="GO:0003735">
    <property type="term" value="F:structural constituent of ribosome"/>
    <property type="evidence" value="ECO:0007669"/>
    <property type="project" value="InterPro"/>
</dbReference>
<dbReference type="GO" id="GO:0006412">
    <property type="term" value="P:translation"/>
    <property type="evidence" value="ECO:0007669"/>
    <property type="project" value="UniProtKB-UniRule"/>
</dbReference>
<dbReference type="FunFam" id="3.30.230.10:FF:000001">
    <property type="entry name" value="30S ribosomal protein S9"/>
    <property type="match status" value="1"/>
</dbReference>
<dbReference type="Gene3D" id="3.30.230.10">
    <property type="match status" value="1"/>
</dbReference>
<dbReference type="HAMAP" id="MF_00532_B">
    <property type="entry name" value="Ribosomal_uS9_B"/>
    <property type="match status" value="1"/>
</dbReference>
<dbReference type="InterPro" id="IPR020568">
    <property type="entry name" value="Ribosomal_Su5_D2-typ_SF"/>
</dbReference>
<dbReference type="InterPro" id="IPR000754">
    <property type="entry name" value="Ribosomal_uS9"/>
</dbReference>
<dbReference type="InterPro" id="IPR023035">
    <property type="entry name" value="Ribosomal_uS9_bac/plastid"/>
</dbReference>
<dbReference type="InterPro" id="IPR020574">
    <property type="entry name" value="Ribosomal_uS9_CS"/>
</dbReference>
<dbReference type="InterPro" id="IPR014721">
    <property type="entry name" value="Ribsml_uS5_D2-typ_fold_subgr"/>
</dbReference>
<dbReference type="NCBIfam" id="NF001099">
    <property type="entry name" value="PRK00132.1"/>
    <property type="match status" value="1"/>
</dbReference>
<dbReference type="PANTHER" id="PTHR21569">
    <property type="entry name" value="RIBOSOMAL PROTEIN S9"/>
    <property type="match status" value="1"/>
</dbReference>
<dbReference type="PANTHER" id="PTHR21569:SF1">
    <property type="entry name" value="SMALL RIBOSOMAL SUBUNIT PROTEIN US9M"/>
    <property type="match status" value="1"/>
</dbReference>
<dbReference type="Pfam" id="PF00380">
    <property type="entry name" value="Ribosomal_S9"/>
    <property type="match status" value="1"/>
</dbReference>
<dbReference type="SUPFAM" id="SSF54211">
    <property type="entry name" value="Ribosomal protein S5 domain 2-like"/>
    <property type="match status" value="1"/>
</dbReference>
<dbReference type="PROSITE" id="PS00360">
    <property type="entry name" value="RIBOSOMAL_S9"/>
    <property type="match status" value="1"/>
</dbReference>
<evidence type="ECO:0000255" key="1">
    <source>
        <dbReference type="HAMAP-Rule" id="MF_00532"/>
    </source>
</evidence>
<evidence type="ECO:0000256" key="2">
    <source>
        <dbReference type="SAM" id="MobiDB-lite"/>
    </source>
</evidence>
<evidence type="ECO:0000305" key="3"/>
<proteinExistence type="inferred from homology"/>
<organism>
    <name type="scientific">Desulforamulus reducens (strain ATCC BAA-1160 / DSM 100696 / MI-1)</name>
    <name type="common">Desulfotomaculum reducens</name>
    <dbReference type="NCBI Taxonomy" id="349161"/>
    <lineage>
        <taxon>Bacteria</taxon>
        <taxon>Bacillati</taxon>
        <taxon>Bacillota</taxon>
        <taxon>Clostridia</taxon>
        <taxon>Eubacteriales</taxon>
        <taxon>Peptococcaceae</taxon>
        <taxon>Desulforamulus</taxon>
    </lineage>
</organism>